<gene>
    <name evidence="1" type="primary">rpsS</name>
    <name type="ordered locus">Sbal_4166</name>
</gene>
<evidence type="ECO:0000255" key="1">
    <source>
        <dbReference type="HAMAP-Rule" id="MF_00531"/>
    </source>
</evidence>
<evidence type="ECO:0000305" key="2"/>
<organism>
    <name type="scientific">Shewanella baltica (strain OS155 / ATCC BAA-1091)</name>
    <dbReference type="NCBI Taxonomy" id="325240"/>
    <lineage>
        <taxon>Bacteria</taxon>
        <taxon>Pseudomonadati</taxon>
        <taxon>Pseudomonadota</taxon>
        <taxon>Gammaproteobacteria</taxon>
        <taxon>Alteromonadales</taxon>
        <taxon>Shewanellaceae</taxon>
        <taxon>Shewanella</taxon>
    </lineage>
</organism>
<reference key="1">
    <citation type="submission" date="2007-02" db="EMBL/GenBank/DDBJ databases">
        <title>Complete sequence of chromosome of Shewanella baltica OS155.</title>
        <authorList>
            <consortium name="US DOE Joint Genome Institute"/>
            <person name="Copeland A."/>
            <person name="Lucas S."/>
            <person name="Lapidus A."/>
            <person name="Barry K."/>
            <person name="Detter J.C."/>
            <person name="Glavina del Rio T."/>
            <person name="Hammon N."/>
            <person name="Israni S."/>
            <person name="Dalin E."/>
            <person name="Tice H."/>
            <person name="Pitluck S."/>
            <person name="Sims D.R."/>
            <person name="Brettin T."/>
            <person name="Bruce D."/>
            <person name="Han C."/>
            <person name="Tapia R."/>
            <person name="Brainard J."/>
            <person name="Schmutz J."/>
            <person name="Larimer F."/>
            <person name="Land M."/>
            <person name="Hauser L."/>
            <person name="Kyrpides N."/>
            <person name="Mikhailova N."/>
            <person name="Brettar I."/>
            <person name="Klappenbach J."/>
            <person name="Konstantinidis K."/>
            <person name="Rodrigues J."/>
            <person name="Tiedje J."/>
            <person name="Richardson P."/>
        </authorList>
    </citation>
    <scope>NUCLEOTIDE SEQUENCE [LARGE SCALE GENOMIC DNA]</scope>
    <source>
        <strain>OS155 / ATCC BAA-1091</strain>
    </source>
</reference>
<feature type="chain" id="PRO_1000051121" description="Small ribosomal subunit protein uS19">
    <location>
        <begin position="1"/>
        <end position="92"/>
    </location>
</feature>
<protein>
    <recommendedName>
        <fullName evidence="1">Small ribosomal subunit protein uS19</fullName>
    </recommendedName>
    <alternativeName>
        <fullName evidence="2">30S ribosomal protein S19</fullName>
    </alternativeName>
</protein>
<comment type="function">
    <text evidence="1">Protein S19 forms a complex with S13 that binds strongly to the 16S ribosomal RNA.</text>
</comment>
<comment type="similarity">
    <text evidence="1">Belongs to the universal ribosomal protein uS19 family.</text>
</comment>
<proteinExistence type="inferred from homology"/>
<sequence length="92" mass="10472">MPRSLKKGPFIDLHLLKKVEKAMEAGDKKPIKTWSRRSMIIPNMIGLTIAVHNGRQHVPVFVTDEMIGHKLGEFSPTRTYRGHAADKKAKKR</sequence>
<dbReference type="EMBL" id="CP000563">
    <property type="protein sequence ID" value="ABN63631.1"/>
    <property type="molecule type" value="Genomic_DNA"/>
</dbReference>
<dbReference type="RefSeq" id="WP_006083596.1">
    <property type="nucleotide sequence ID" value="NC_009052.1"/>
</dbReference>
<dbReference type="SMR" id="A3DA68"/>
<dbReference type="STRING" id="325240.Sbal_4166"/>
<dbReference type="GeneID" id="94726190"/>
<dbReference type="KEGG" id="sbl:Sbal_4166"/>
<dbReference type="HOGENOM" id="CLU_144911_0_1_6"/>
<dbReference type="OrthoDB" id="9797833at2"/>
<dbReference type="Proteomes" id="UP000001557">
    <property type="component" value="Chromosome"/>
</dbReference>
<dbReference type="GO" id="GO:0005737">
    <property type="term" value="C:cytoplasm"/>
    <property type="evidence" value="ECO:0007669"/>
    <property type="project" value="UniProtKB-ARBA"/>
</dbReference>
<dbReference type="GO" id="GO:0015935">
    <property type="term" value="C:small ribosomal subunit"/>
    <property type="evidence" value="ECO:0007669"/>
    <property type="project" value="InterPro"/>
</dbReference>
<dbReference type="GO" id="GO:0019843">
    <property type="term" value="F:rRNA binding"/>
    <property type="evidence" value="ECO:0007669"/>
    <property type="project" value="UniProtKB-UniRule"/>
</dbReference>
<dbReference type="GO" id="GO:0003735">
    <property type="term" value="F:structural constituent of ribosome"/>
    <property type="evidence" value="ECO:0007669"/>
    <property type="project" value="InterPro"/>
</dbReference>
<dbReference type="GO" id="GO:0000028">
    <property type="term" value="P:ribosomal small subunit assembly"/>
    <property type="evidence" value="ECO:0007669"/>
    <property type="project" value="TreeGrafter"/>
</dbReference>
<dbReference type="GO" id="GO:0006412">
    <property type="term" value="P:translation"/>
    <property type="evidence" value="ECO:0007669"/>
    <property type="project" value="UniProtKB-UniRule"/>
</dbReference>
<dbReference type="FunFam" id="3.30.860.10:FF:000001">
    <property type="entry name" value="30S ribosomal protein S19"/>
    <property type="match status" value="1"/>
</dbReference>
<dbReference type="Gene3D" id="3.30.860.10">
    <property type="entry name" value="30s Ribosomal Protein S19, Chain A"/>
    <property type="match status" value="1"/>
</dbReference>
<dbReference type="HAMAP" id="MF_00531">
    <property type="entry name" value="Ribosomal_uS19"/>
    <property type="match status" value="1"/>
</dbReference>
<dbReference type="InterPro" id="IPR002222">
    <property type="entry name" value="Ribosomal_uS19"/>
</dbReference>
<dbReference type="InterPro" id="IPR005732">
    <property type="entry name" value="Ribosomal_uS19_bac-type"/>
</dbReference>
<dbReference type="InterPro" id="IPR020934">
    <property type="entry name" value="Ribosomal_uS19_CS"/>
</dbReference>
<dbReference type="InterPro" id="IPR023575">
    <property type="entry name" value="Ribosomal_uS19_SF"/>
</dbReference>
<dbReference type="NCBIfam" id="TIGR01050">
    <property type="entry name" value="rpsS_bact"/>
    <property type="match status" value="1"/>
</dbReference>
<dbReference type="PANTHER" id="PTHR11880">
    <property type="entry name" value="RIBOSOMAL PROTEIN S19P FAMILY MEMBER"/>
    <property type="match status" value="1"/>
</dbReference>
<dbReference type="PANTHER" id="PTHR11880:SF8">
    <property type="entry name" value="SMALL RIBOSOMAL SUBUNIT PROTEIN US19M"/>
    <property type="match status" value="1"/>
</dbReference>
<dbReference type="Pfam" id="PF00203">
    <property type="entry name" value="Ribosomal_S19"/>
    <property type="match status" value="1"/>
</dbReference>
<dbReference type="PIRSF" id="PIRSF002144">
    <property type="entry name" value="Ribosomal_S19"/>
    <property type="match status" value="1"/>
</dbReference>
<dbReference type="PRINTS" id="PR00975">
    <property type="entry name" value="RIBOSOMALS19"/>
</dbReference>
<dbReference type="SUPFAM" id="SSF54570">
    <property type="entry name" value="Ribosomal protein S19"/>
    <property type="match status" value="1"/>
</dbReference>
<dbReference type="PROSITE" id="PS00323">
    <property type="entry name" value="RIBOSOMAL_S19"/>
    <property type="match status" value="1"/>
</dbReference>
<accession>A3DA68</accession>
<keyword id="KW-1185">Reference proteome</keyword>
<keyword id="KW-0687">Ribonucleoprotein</keyword>
<keyword id="KW-0689">Ribosomal protein</keyword>
<keyword id="KW-0694">RNA-binding</keyword>
<keyword id="KW-0699">rRNA-binding</keyword>
<name>RS19_SHEB5</name>